<name>Y1409_SYNY3</name>
<sequence>MRIFPVFLLTFSLFLIKEEIVTAEVKVSAPVVNQSGIKLNLERQFTGSDVAINRIHFSPDGQFLLTAAADGVGTLWTKEGEMLGQLQGQKPPMFNARLSPDRQILITTGYDGTIRLWNLQGELLEEQQPHRAAVADAIFSPDSQIIVTCSDDGQTKIFTRQGQEIASVLKSGTARNLAYHPQGLLIASVSDSGSLHLINPNGKIEREISTGQGRINNVNFSPNGEQLLTSGINGSAKLWNLAGELIHEYKVVPTGWVNSAQFYPKGEWLATASDDGTIRFWQKDGQLIYELPLVNARLTSLSFSPDGKQLAATSSQGQVWVFNLSY</sequence>
<accession>P73594</accession>
<gene>
    <name type="ordered locus">slr1409</name>
</gene>
<feature type="chain" id="PRO_0000051518" description="WD repeat-containing protein slr1409">
    <location>
        <begin position="1"/>
        <end position="326"/>
    </location>
</feature>
<feature type="repeat" description="WD 1">
    <location>
        <begin position="47"/>
        <end position="77"/>
    </location>
</feature>
<feature type="repeat" description="WD 2">
    <location>
        <begin position="88"/>
        <end position="118"/>
    </location>
</feature>
<feature type="repeat" description="WD 3">
    <location>
        <begin position="129"/>
        <end position="159"/>
    </location>
</feature>
<feature type="repeat" description="WD 4">
    <location>
        <begin position="169"/>
        <end position="199"/>
    </location>
</feature>
<feature type="repeat" description="WD 5">
    <location>
        <begin position="210"/>
        <end position="240"/>
    </location>
</feature>
<feature type="repeat" description="WD 6">
    <location>
        <begin position="252"/>
        <end position="282"/>
    </location>
</feature>
<organism>
    <name type="scientific">Synechocystis sp. (strain ATCC 27184 / PCC 6803 / Kazusa)</name>
    <dbReference type="NCBI Taxonomy" id="1111708"/>
    <lineage>
        <taxon>Bacteria</taxon>
        <taxon>Bacillati</taxon>
        <taxon>Cyanobacteriota</taxon>
        <taxon>Cyanophyceae</taxon>
        <taxon>Synechococcales</taxon>
        <taxon>Merismopediaceae</taxon>
        <taxon>Synechocystis</taxon>
    </lineage>
</organism>
<proteinExistence type="evidence at protein level"/>
<protein>
    <recommendedName>
        <fullName>WD repeat-containing protein slr1409</fullName>
    </recommendedName>
</protein>
<reference key="1">
    <citation type="journal article" date="1996" name="DNA Res.">
        <title>Sequence analysis of the genome of the unicellular cyanobacterium Synechocystis sp. strain PCC6803. II. Sequence determination of the entire genome and assignment of potential protein-coding regions.</title>
        <authorList>
            <person name="Kaneko T."/>
            <person name="Sato S."/>
            <person name="Kotani H."/>
            <person name="Tanaka A."/>
            <person name="Asamizu E."/>
            <person name="Nakamura Y."/>
            <person name="Miyajima N."/>
            <person name="Hirosawa M."/>
            <person name="Sugiura M."/>
            <person name="Sasamoto S."/>
            <person name="Kimura T."/>
            <person name="Hosouchi T."/>
            <person name="Matsuno A."/>
            <person name="Muraki A."/>
            <person name="Nakazaki N."/>
            <person name="Naruo K."/>
            <person name="Okumura S."/>
            <person name="Shimpo S."/>
            <person name="Takeuchi C."/>
            <person name="Wada T."/>
            <person name="Watanabe A."/>
            <person name="Yamada M."/>
            <person name="Yasuda M."/>
            <person name="Tabata S."/>
        </authorList>
    </citation>
    <scope>NUCLEOTIDE SEQUENCE [LARGE SCALE GENOMIC DNA]</scope>
    <source>
        <strain>ATCC 27184 / PCC 6803 / Kazusa</strain>
    </source>
</reference>
<reference key="2">
    <citation type="journal article" date="1997" name="Electrophoresis">
        <title>Towards a proteome project of cyanobacterium Synechocystis sp. strain PCC6803: linking 130 protein spots with their respective genes.</title>
        <authorList>
            <person name="Sazuka T."/>
            <person name="Ohara O."/>
        </authorList>
    </citation>
    <scope>PROTEIN SEQUENCE OF 24-43</scope>
</reference>
<keyword id="KW-0903">Direct protein sequencing</keyword>
<keyword id="KW-1185">Reference proteome</keyword>
<keyword id="KW-0677">Repeat</keyword>
<keyword id="KW-0853">WD repeat</keyword>
<dbReference type="EMBL" id="BA000022">
    <property type="protein sequence ID" value="BAA17638.1"/>
    <property type="molecule type" value="Genomic_DNA"/>
</dbReference>
<dbReference type="PIR" id="S77304">
    <property type="entry name" value="S77304"/>
</dbReference>
<dbReference type="SMR" id="P73594"/>
<dbReference type="STRING" id="1148.gene:10498505"/>
<dbReference type="PaxDb" id="1148-1652718"/>
<dbReference type="EnsemblBacteria" id="BAA17638">
    <property type="protein sequence ID" value="BAA17638"/>
    <property type="gene ID" value="BAA17638"/>
</dbReference>
<dbReference type="KEGG" id="syn:slr1409"/>
<dbReference type="eggNOG" id="COG2319">
    <property type="taxonomic scope" value="Bacteria"/>
</dbReference>
<dbReference type="InParanoid" id="P73594"/>
<dbReference type="PhylomeDB" id="P73594"/>
<dbReference type="Proteomes" id="UP000001425">
    <property type="component" value="Chromosome"/>
</dbReference>
<dbReference type="GO" id="GO:0030288">
    <property type="term" value="C:outer membrane-bounded periplasmic space"/>
    <property type="evidence" value="ECO:0007005"/>
    <property type="project" value="UniProtKB"/>
</dbReference>
<dbReference type="CDD" id="cd00200">
    <property type="entry name" value="WD40"/>
    <property type="match status" value="1"/>
</dbReference>
<dbReference type="Gene3D" id="2.130.10.10">
    <property type="entry name" value="YVTN repeat-like/Quinoprotein amine dehydrogenase"/>
    <property type="match status" value="2"/>
</dbReference>
<dbReference type="InterPro" id="IPR024977">
    <property type="entry name" value="Apc4-like_WD40_dom"/>
</dbReference>
<dbReference type="InterPro" id="IPR015943">
    <property type="entry name" value="WD40/YVTN_repeat-like_dom_sf"/>
</dbReference>
<dbReference type="InterPro" id="IPR019775">
    <property type="entry name" value="WD40_repeat_CS"/>
</dbReference>
<dbReference type="InterPro" id="IPR036322">
    <property type="entry name" value="WD40_repeat_dom_sf"/>
</dbReference>
<dbReference type="InterPro" id="IPR001680">
    <property type="entry name" value="WD40_rpt"/>
</dbReference>
<dbReference type="PANTHER" id="PTHR19879">
    <property type="entry name" value="TRANSCRIPTION INITIATION FACTOR TFIID"/>
    <property type="match status" value="1"/>
</dbReference>
<dbReference type="PANTHER" id="PTHR19879:SF9">
    <property type="entry name" value="TRANSCRIPTION INITIATION FACTOR TFIID SUBUNIT 5"/>
    <property type="match status" value="1"/>
</dbReference>
<dbReference type="Pfam" id="PF12894">
    <property type="entry name" value="ANAPC4_WD40"/>
    <property type="match status" value="1"/>
</dbReference>
<dbReference type="Pfam" id="PF00400">
    <property type="entry name" value="WD40"/>
    <property type="match status" value="4"/>
</dbReference>
<dbReference type="SMART" id="SM00320">
    <property type="entry name" value="WD40"/>
    <property type="match status" value="7"/>
</dbReference>
<dbReference type="SUPFAM" id="SSF50978">
    <property type="entry name" value="WD40 repeat-like"/>
    <property type="match status" value="1"/>
</dbReference>
<dbReference type="PROSITE" id="PS00678">
    <property type="entry name" value="WD_REPEATS_1"/>
    <property type="match status" value="2"/>
</dbReference>
<dbReference type="PROSITE" id="PS50082">
    <property type="entry name" value="WD_REPEATS_2"/>
    <property type="match status" value="4"/>
</dbReference>
<dbReference type="PROSITE" id="PS50294">
    <property type="entry name" value="WD_REPEATS_REGION"/>
    <property type="match status" value="1"/>
</dbReference>